<proteinExistence type="inferred from homology"/>
<protein>
    <recommendedName>
        <fullName evidence="1">Na(+)/H(+) antiporter NhaA</fullName>
    </recommendedName>
    <alternativeName>
        <fullName evidence="1">Sodium/proton antiporter NhaA</fullName>
    </alternativeName>
</protein>
<comment type="function">
    <text evidence="1">Na(+)/H(+) antiporter that extrudes sodium in exchange for external protons.</text>
</comment>
<comment type="catalytic activity">
    <reaction evidence="1">
        <text>Na(+)(in) + 2 H(+)(out) = Na(+)(out) + 2 H(+)(in)</text>
        <dbReference type="Rhea" id="RHEA:29251"/>
        <dbReference type="ChEBI" id="CHEBI:15378"/>
        <dbReference type="ChEBI" id="CHEBI:29101"/>
    </reaction>
    <physiologicalReaction direction="left-to-right" evidence="1">
        <dbReference type="Rhea" id="RHEA:29252"/>
    </physiologicalReaction>
</comment>
<comment type="subcellular location">
    <subcellularLocation>
        <location evidence="1">Cell inner membrane</location>
        <topology evidence="1">Multi-pass membrane protein</topology>
    </subcellularLocation>
</comment>
<comment type="similarity">
    <text evidence="1">Belongs to the NhaA Na(+)/H(+) (TC 2.A.33) antiporter family.</text>
</comment>
<gene>
    <name evidence="1" type="primary">nhaA</name>
    <name type="ordered locus">SDY_0018</name>
</gene>
<feature type="chain" id="PRO_0000334436" description="Na(+)/H(+) antiporter NhaA">
    <location>
        <begin position="1"/>
        <end position="388"/>
    </location>
</feature>
<feature type="topological domain" description="Cytoplasmic" evidence="1">
    <location>
        <begin position="1"/>
        <end position="11"/>
    </location>
</feature>
<feature type="transmembrane region" description="Helical; Name=1" evidence="1">
    <location>
        <begin position="12"/>
        <end position="31"/>
    </location>
</feature>
<feature type="topological domain" description="Periplasmic" evidence="1">
    <location>
        <begin position="32"/>
        <end position="58"/>
    </location>
</feature>
<feature type="transmembrane region" description="Helical; Name=2" evidence="1">
    <location>
        <begin position="59"/>
        <end position="80"/>
    </location>
</feature>
<feature type="topological domain" description="Cytoplasmic" evidence="1">
    <location>
        <begin position="81"/>
        <end position="96"/>
    </location>
</feature>
<feature type="transmembrane region" description="Helical; Name=3" evidence="1">
    <location>
        <begin position="97"/>
        <end position="116"/>
    </location>
</feature>
<feature type="topological domain" description="Periplasmic" evidence="1">
    <location>
        <begin position="117"/>
        <end position="122"/>
    </location>
</feature>
<feature type="transmembrane region" description="Helical; Name=4" evidence="1">
    <location>
        <begin position="123"/>
        <end position="130"/>
    </location>
</feature>
<feature type="topological domain" description="Cytoplasmic" evidence="1">
    <location>
        <begin position="131"/>
        <end position="154"/>
    </location>
</feature>
<feature type="transmembrane region" description="Helical; Name=5" evidence="1">
    <location>
        <begin position="155"/>
        <end position="176"/>
    </location>
</feature>
<feature type="topological domain" description="Periplasmic" evidence="1">
    <location>
        <begin position="177"/>
        <end position="180"/>
    </location>
</feature>
<feature type="transmembrane region" description="Helical; Name=6" evidence="1">
    <location>
        <begin position="181"/>
        <end position="200"/>
    </location>
</feature>
<feature type="topological domain" description="Cytoplasmic" evidence="1">
    <location>
        <begin position="201"/>
        <end position="204"/>
    </location>
</feature>
<feature type="transmembrane region" description="Helical; Name=7" evidence="1">
    <location>
        <begin position="205"/>
        <end position="222"/>
    </location>
</feature>
<feature type="topological domain" description="Periplasmic" evidence="1">
    <location>
        <position position="223"/>
    </location>
</feature>
<feature type="transmembrane region" description="Helical; Name=8" evidence="1">
    <location>
        <begin position="224"/>
        <end position="236"/>
    </location>
</feature>
<feature type="topological domain" description="Cytoplasmic" evidence="1">
    <location>
        <begin position="237"/>
        <end position="253"/>
    </location>
</feature>
<feature type="transmembrane region" description="Helical; Name=9" evidence="1">
    <location>
        <begin position="254"/>
        <end position="272"/>
    </location>
</feature>
<feature type="topological domain" description="Periplasmic" evidence="1">
    <location>
        <begin position="273"/>
        <end position="286"/>
    </location>
</feature>
<feature type="transmembrane region" description="Helical; Name=10" evidence="1">
    <location>
        <begin position="287"/>
        <end position="310"/>
    </location>
</feature>
<feature type="topological domain" description="Cytoplasmic" evidence="1">
    <location>
        <begin position="311"/>
        <end position="339"/>
    </location>
</feature>
<feature type="transmembrane region" description="Helical; Name=11" evidence="1">
    <location>
        <begin position="340"/>
        <end position="350"/>
    </location>
</feature>
<feature type="topological domain" description="Periplasmic" evidence="1">
    <location>
        <begin position="351"/>
        <end position="357"/>
    </location>
</feature>
<feature type="transmembrane region" description="Helical; Name=12" evidence="1">
    <location>
        <begin position="358"/>
        <end position="380"/>
    </location>
</feature>
<feature type="topological domain" description="Cytoplasmic" evidence="1">
    <location>
        <begin position="381"/>
        <end position="388"/>
    </location>
</feature>
<keyword id="KW-0050">Antiport</keyword>
<keyword id="KW-0997">Cell inner membrane</keyword>
<keyword id="KW-1003">Cell membrane</keyword>
<keyword id="KW-0406">Ion transport</keyword>
<keyword id="KW-0472">Membrane</keyword>
<keyword id="KW-1185">Reference proteome</keyword>
<keyword id="KW-0915">Sodium</keyword>
<keyword id="KW-0739">Sodium transport</keyword>
<keyword id="KW-0812">Transmembrane</keyword>
<keyword id="KW-1133">Transmembrane helix</keyword>
<keyword id="KW-0813">Transport</keyword>
<organism>
    <name type="scientific">Shigella dysenteriae serotype 1 (strain Sd197)</name>
    <dbReference type="NCBI Taxonomy" id="300267"/>
    <lineage>
        <taxon>Bacteria</taxon>
        <taxon>Pseudomonadati</taxon>
        <taxon>Pseudomonadota</taxon>
        <taxon>Gammaproteobacteria</taxon>
        <taxon>Enterobacterales</taxon>
        <taxon>Enterobacteriaceae</taxon>
        <taxon>Shigella</taxon>
    </lineage>
</organism>
<evidence type="ECO:0000255" key="1">
    <source>
        <dbReference type="HAMAP-Rule" id="MF_01844"/>
    </source>
</evidence>
<name>NHAA_SHIDS</name>
<accession>Q32KA0</accession>
<sequence length="388" mass="41378">MKHLHRFFSSDASGGIILIIAAILAMMMANSGATSGWYHDFLETPVQLRVGSLEINKNMLLWINDALMAVFFLLVGLEVKRELMQGSLASLRQAAFPVIAAIGGMIVPALLYLAFNYADPITREGWAIPAATDIAFALGVLALLGSRVPLALKIFLMALAIIDDLGAIIIIALFYTNDLSMASLGVAAVAIAVLAVLNLCGVRRTGVYILVGVVLWTAVLKSGVHATLAGVIVGFFIPLKEKHGRSTAKRLEHVLHPWVAYLILPLFAFANAGVSLQGVTLDGLTSILPLGIIAGLLIGKPLGISLFCWLALRLKLAHLPEGTTYQQIMAVGILCGIGFTMSIFIASLAFGSVDPELINWAKLGILVGSISSAVIGYSWLRVRLRPSV</sequence>
<reference key="1">
    <citation type="journal article" date="2005" name="Nucleic Acids Res.">
        <title>Genome dynamics and diversity of Shigella species, the etiologic agents of bacillary dysentery.</title>
        <authorList>
            <person name="Yang F."/>
            <person name="Yang J."/>
            <person name="Zhang X."/>
            <person name="Chen L."/>
            <person name="Jiang Y."/>
            <person name="Yan Y."/>
            <person name="Tang X."/>
            <person name="Wang J."/>
            <person name="Xiong Z."/>
            <person name="Dong J."/>
            <person name="Xue Y."/>
            <person name="Zhu Y."/>
            <person name="Xu X."/>
            <person name="Sun L."/>
            <person name="Chen S."/>
            <person name="Nie H."/>
            <person name="Peng J."/>
            <person name="Xu J."/>
            <person name="Wang Y."/>
            <person name="Yuan Z."/>
            <person name="Wen Y."/>
            <person name="Yao Z."/>
            <person name="Shen Y."/>
            <person name="Qiang B."/>
            <person name="Hou Y."/>
            <person name="Yu J."/>
            <person name="Jin Q."/>
        </authorList>
    </citation>
    <scope>NUCLEOTIDE SEQUENCE [LARGE SCALE GENOMIC DNA]</scope>
    <source>
        <strain>Sd197</strain>
    </source>
</reference>
<dbReference type="EMBL" id="CP000034">
    <property type="protein sequence ID" value="ABB60258.1"/>
    <property type="molecule type" value="Genomic_DNA"/>
</dbReference>
<dbReference type="RefSeq" id="WP_000681370.1">
    <property type="nucleotide sequence ID" value="NC_007606.1"/>
</dbReference>
<dbReference type="RefSeq" id="YP_401746.1">
    <property type="nucleotide sequence ID" value="NC_007606.1"/>
</dbReference>
<dbReference type="SMR" id="Q32KA0"/>
<dbReference type="STRING" id="300267.SDY_0018"/>
<dbReference type="EnsemblBacteria" id="ABB60258">
    <property type="protein sequence ID" value="ABB60258"/>
    <property type="gene ID" value="SDY_0018"/>
</dbReference>
<dbReference type="KEGG" id="sdy:SDY_0018"/>
<dbReference type="PATRIC" id="fig|300267.13.peg.19"/>
<dbReference type="HOGENOM" id="CLU_015803_1_0_6"/>
<dbReference type="Proteomes" id="UP000002716">
    <property type="component" value="Chromosome"/>
</dbReference>
<dbReference type="GO" id="GO:0005886">
    <property type="term" value="C:plasma membrane"/>
    <property type="evidence" value="ECO:0007669"/>
    <property type="project" value="UniProtKB-SubCell"/>
</dbReference>
<dbReference type="GO" id="GO:0015385">
    <property type="term" value="F:sodium:proton antiporter activity"/>
    <property type="evidence" value="ECO:0007669"/>
    <property type="project" value="TreeGrafter"/>
</dbReference>
<dbReference type="GO" id="GO:0006885">
    <property type="term" value="P:regulation of pH"/>
    <property type="evidence" value="ECO:0007669"/>
    <property type="project" value="InterPro"/>
</dbReference>
<dbReference type="FunFam" id="1.20.1530.10:FF:000001">
    <property type="entry name" value="Na(+)/H(+) antiporter NhaA"/>
    <property type="match status" value="1"/>
</dbReference>
<dbReference type="Gene3D" id="1.20.1530.10">
    <property type="entry name" value="Na+/H+ antiporter like domain"/>
    <property type="match status" value="1"/>
</dbReference>
<dbReference type="HAMAP" id="MF_01844">
    <property type="entry name" value="NhaA"/>
    <property type="match status" value="1"/>
</dbReference>
<dbReference type="InterPro" id="IPR023171">
    <property type="entry name" value="Na/H_antiporter_dom_sf"/>
</dbReference>
<dbReference type="InterPro" id="IPR004670">
    <property type="entry name" value="NhaA"/>
</dbReference>
<dbReference type="NCBIfam" id="TIGR00773">
    <property type="entry name" value="NhaA"/>
    <property type="match status" value="1"/>
</dbReference>
<dbReference type="NCBIfam" id="NF007111">
    <property type="entry name" value="PRK09560.1"/>
    <property type="match status" value="1"/>
</dbReference>
<dbReference type="NCBIfam" id="NF007112">
    <property type="entry name" value="PRK09561.1"/>
    <property type="match status" value="1"/>
</dbReference>
<dbReference type="PANTHER" id="PTHR30341:SF0">
    <property type="entry name" value="NA(+)_H(+) ANTIPORTER NHAA"/>
    <property type="match status" value="1"/>
</dbReference>
<dbReference type="PANTHER" id="PTHR30341">
    <property type="entry name" value="SODIUM ION/PROTON ANTIPORTER NHAA-RELATED"/>
    <property type="match status" value="1"/>
</dbReference>
<dbReference type="Pfam" id="PF06965">
    <property type="entry name" value="Na_H_antiport_1"/>
    <property type="match status" value="1"/>
</dbReference>